<keyword id="KW-0903">Direct protein sequencing</keyword>
<keyword id="KW-0349">Heme</keyword>
<keyword id="KW-0408">Iron</keyword>
<keyword id="KW-0479">Metal-binding</keyword>
<keyword id="KW-0561">Oxygen transport</keyword>
<keyword id="KW-0813">Transport</keyword>
<organism>
    <name type="scientific">Apus apus</name>
    <name type="common">Common swift</name>
    <dbReference type="NCBI Taxonomy" id="8895"/>
    <lineage>
        <taxon>Eukaryota</taxon>
        <taxon>Metazoa</taxon>
        <taxon>Chordata</taxon>
        <taxon>Craniata</taxon>
        <taxon>Vertebrata</taxon>
        <taxon>Euteleostomi</taxon>
        <taxon>Archelosauria</taxon>
        <taxon>Archosauria</taxon>
        <taxon>Dinosauria</taxon>
        <taxon>Saurischia</taxon>
        <taxon>Theropoda</taxon>
        <taxon>Coelurosauria</taxon>
        <taxon>Aves</taxon>
        <taxon>Neognathae</taxon>
        <taxon>Neoaves</taxon>
        <taxon>Strisores</taxon>
        <taxon>Apodiformes</taxon>
        <taxon>Apodidae</taxon>
        <taxon>Apodinae</taxon>
        <taxon>Apus</taxon>
    </lineage>
</organism>
<protein>
    <recommendedName>
        <fullName>Hemoglobin subunit alpha-D</fullName>
    </recommendedName>
    <alternativeName>
        <fullName>Alpha-D-globin</fullName>
    </alternativeName>
    <alternativeName>
        <fullName>Hemoglobin alpha-D chain</fullName>
    </alternativeName>
</protein>
<proteinExistence type="evidence at protein level"/>
<evidence type="ECO:0000255" key="1">
    <source>
        <dbReference type="PROSITE-ProRule" id="PRU00238"/>
    </source>
</evidence>
<sequence>MLTAEDKKLIQQVWDKLQGCQEEVGAETLQRMFTTYPQTKTYFPHFDLSPGSDQIRGHGKKVVAALGTAVKSLDNLSQALSELSNLHAYNLRVDPVNFKLLAQCLQVVLATHMTKDYTPEIHAAFDKFLSAVAAVLAEKYR</sequence>
<gene>
    <name type="primary">HBAD</name>
</gene>
<name>HBAD_APUAP</name>
<accession>P15164</accession>
<comment type="function">
    <text>Involved in oxygen transport from the lung to the various peripheral tissues.</text>
</comment>
<comment type="subunit">
    <text>Heterotetramer of two alpha-D chains and two beta chains.</text>
</comment>
<comment type="tissue specificity">
    <text>Red blood cells.</text>
</comment>
<comment type="developmental stage">
    <text>In birds, the alpha-D chain occurs in a minor hemoglobin component, called hemoglobin d, which is expressed in late embryonic and adult life.</text>
</comment>
<comment type="similarity">
    <text evidence="1">Belongs to the globin family.</text>
</comment>
<feature type="chain" id="PRO_0000052819" description="Hemoglobin subunit alpha-D">
    <location>
        <begin position="1"/>
        <end position="141"/>
    </location>
</feature>
<feature type="domain" description="Globin" evidence="1">
    <location>
        <begin position="1"/>
        <end position="141"/>
    </location>
</feature>
<feature type="binding site" description="distal binding residue">
    <location>
        <position position="58"/>
    </location>
    <ligand>
        <name>heme b</name>
        <dbReference type="ChEBI" id="CHEBI:60344"/>
    </ligand>
    <ligandPart>
        <name>Fe</name>
        <dbReference type="ChEBI" id="CHEBI:18248"/>
    </ligandPart>
</feature>
<feature type="binding site" description="proximal binding residue">
    <location>
        <position position="87"/>
    </location>
    <ligand>
        <name>heme b</name>
        <dbReference type="ChEBI" id="CHEBI:60344"/>
    </ligand>
    <ligandPart>
        <name>Fe</name>
        <dbReference type="ChEBI" id="CHEBI:18248"/>
    </ligandPart>
</feature>
<dbReference type="PIR" id="S07481">
    <property type="entry name" value="HASID"/>
</dbReference>
<dbReference type="SMR" id="P15164"/>
<dbReference type="GO" id="GO:0072562">
    <property type="term" value="C:blood microparticle"/>
    <property type="evidence" value="ECO:0007669"/>
    <property type="project" value="TreeGrafter"/>
</dbReference>
<dbReference type="GO" id="GO:0031838">
    <property type="term" value="C:haptoglobin-hemoglobin complex"/>
    <property type="evidence" value="ECO:0007669"/>
    <property type="project" value="TreeGrafter"/>
</dbReference>
<dbReference type="GO" id="GO:0005833">
    <property type="term" value="C:hemoglobin complex"/>
    <property type="evidence" value="ECO:0007669"/>
    <property type="project" value="InterPro"/>
</dbReference>
<dbReference type="GO" id="GO:0031720">
    <property type="term" value="F:haptoglobin binding"/>
    <property type="evidence" value="ECO:0007669"/>
    <property type="project" value="TreeGrafter"/>
</dbReference>
<dbReference type="GO" id="GO:0020037">
    <property type="term" value="F:heme binding"/>
    <property type="evidence" value="ECO:0007669"/>
    <property type="project" value="InterPro"/>
</dbReference>
<dbReference type="GO" id="GO:0046872">
    <property type="term" value="F:metal ion binding"/>
    <property type="evidence" value="ECO:0007669"/>
    <property type="project" value="UniProtKB-KW"/>
</dbReference>
<dbReference type="GO" id="GO:0043177">
    <property type="term" value="F:organic acid binding"/>
    <property type="evidence" value="ECO:0007669"/>
    <property type="project" value="TreeGrafter"/>
</dbReference>
<dbReference type="GO" id="GO:0019825">
    <property type="term" value="F:oxygen binding"/>
    <property type="evidence" value="ECO:0007669"/>
    <property type="project" value="InterPro"/>
</dbReference>
<dbReference type="GO" id="GO:0005344">
    <property type="term" value="F:oxygen carrier activity"/>
    <property type="evidence" value="ECO:0007669"/>
    <property type="project" value="UniProtKB-KW"/>
</dbReference>
<dbReference type="GO" id="GO:0004601">
    <property type="term" value="F:peroxidase activity"/>
    <property type="evidence" value="ECO:0007669"/>
    <property type="project" value="TreeGrafter"/>
</dbReference>
<dbReference type="GO" id="GO:0042744">
    <property type="term" value="P:hydrogen peroxide catabolic process"/>
    <property type="evidence" value="ECO:0007669"/>
    <property type="project" value="TreeGrafter"/>
</dbReference>
<dbReference type="CDD" id="cd08927">
    <property type="entry name" value="Hb-alpha-like"/>
    <property type="match status" value="1"/>
</dbReference>
<dbReference type="FunFam" id="1.10.490.10:FF:000002">
    <property type="entry name" value="Hemoglobin subunit alpha"/>
    <property type="match status" value="1"/>
</dbReference>
<dbReference type="Gene3D" id="1.10.490.10">
    <property type="entry name" value="Globins"/>
    <property type="match status" value="1"/>
</dbReference>
<dbReference type="InterPro" id="IPR000971">
    <property type="entry name" value="Globin"/>
</dbReference>
<dbReference type="InterPro" id="IPR009050">
    <property type="entry name" value="Globin-like_sf"/>
</dbReference>
<dbReference type="InterPro" id="IPR012292">
    <property type="entry name" value="Globin/Proto"/>
</dbReference>
<dbReference type="InterPro" id="IPR002338">
    <property type="entry name" value="Hemoglobin_a-typ"/>
</dbReference>
<dbReference type="InterPro" id="IPR050056">
    <property type="entry name" value="Hemoglobin_oxygen_transport"/>
</dbReference>
<dbReference type="PANTHER" id="PTHR11442">
    <property type="entry name" value="HEMOGLOBIN FAMILY MEMBER"/>
    <property type="match status" value="1"/>
</dbReference>
<dbReference type="PANTHER" id="PTHR11442:SF41">
    <property type="entry name" value="HEMOGLOBIN SUBUNIT ZETA"/>
    <property type="match status" value="1"/>
</dbReference>
<dbReference type="Pfam" id="PF00042">
    <property type="entry name" value="Globin"/>
    <property type="match status" value="1"/>
</dbReference>
<dbReference type="PRINTS" id="PR00612">
    <property type="entry name" value="ALPHAHAEM"/>
</dbReference>
<dbReference type="SUPFAM" id="SSF46458">
    <property type="entry name" value="Globin-like"/>
    <property type="match status" value="1"/>
</dbReference>
<dbReference type="PROSITE" id="PS01033">
    <property type="entry name" value="GLOBIN"/>
    <property type="match status" value="1"/>
</dbReference>
<reference key="1">
    <citation type="journal article" date="1989" name="Biol. Chem. Hoppe-Seyler">
        <title>Amino-acid sequences and functional differentiation of hemoglobins A and D from swift (Apus apus, Apodiformes).</title>
        <authorList>
            <person name="Nothum R."/>
            <person name="Weber R.E."/>
            <person name="Kosters J."/>
            <person name="Schneeganss D."/>
            <person name="Braunitzer G."/>
        </authorList>
    </citation>
    <scope>PROTEIN SEQUENCE</scope>
</reference>